<evidence type="ECO:0000255" key="1">
    <source>
        <dbReference type="HAMAP-Rule" id="MF_00670"/>
    </source>
</evidence>
<evidence type="ECO:0000305" key="2">
    <source>
    </source>
</evidence>
<keyword id="KW-0520">NAD</keyword>
<keyword id="KW-0560">Oxidoreductase</keyword>
<keyword id="KW-1185">Reference proteome</keyword>
<proteinExistence type="evidence at transcript level"/>
<protein>
    <recommendedName>
        <fullName evidence="1">Altronate oxidoreductase</fullName>
        <ecNumber evidence="1">1.1.1.58</ecNumber>
    </recommendedName>
    <alternativeName>
        <fullName evidence="1">Tagaturonate dehydrogenase</fullName>
    </alternativeName>
    <alternativeName>
        <fullName evidence="1">Tagaturonate reductase</fullName>
    </alternativeName>
</protein>
<reference key="1">
    <citation type="journal article" date="1998" name="Microbiology">
        <title>A 35.7 kb DNA fragment from the Bacillus subtilis chromosome containing a putative 12.3 kb operon involved in hexuronate catabolism and a perfectly symmetrical hypothetical catabolite-responsive element.</title>
        <authorList>
            <person name="Rivolta C."/>
            <person name="Soldo B."/>
            <person name="Lazarevic V."/>
            <person name="Joris B."/>
            <person name="Mauel C."/>
            <person name="Karamata D."/>
        </authorList>
    </citation>
    <scope>NUCLEOTIDE SEQUENCE [GENOMIC DNA]</scope>
    <scope>PROBABLE OPERON STRUCTURE</scope>
    <source>
        <strain>168</strain>
    </source>
</reference>
<reference key="2">
    <citation type="journal article" date="1997" name="Nature">
        <title>The complete genome sequence of the Gram-positive bacterium Bacillus subtilis.</title>
        <authorList>
            <person name="Kunst F."/>
            <person name="Ogasawara N."/>
            <person name="Moszer I."/>
            <person name="Albertini A.M."/>
            <person name="Alloni G."/>
            <person name="Azevedo V."/>
            <person name="Bertero M.G."/>
            <person name="Bessieres P."/>
            <person name="Bolotin A."/>
            <person name="Borchert S."/>
            <person name="Borriss R."/>
            <person name="Boursier L."/>
            <person name="Brans A."/>
            <person name="Braun M."/>
            <person name="Brignell S.C."/>
            <person name="Bron S."/>
            <person name="Brouillet S."/>
            <person name="Bruschi C.V."/>
            <person name="Caldwell B."/>
            <person name="Capuano V."/>
            <person name="Carter N.M."/>
            <person name="Choi S.-K."/>
            <person name="Codani J.-J."/>
            <person name="Connerton I.F."/>
            <person name="Cummings N.J."/>
            <person name="Daniel R.A."/>
            <person name="Denizot F."/>
            <person name="Devine K.M."/>
            <person name="Duesterhoeft A."/>
            <person name="Ehrlich S.D."/>
            <person name="Emmerson P.T."/>
            <person name="Entian K.-D."/>
            <person name="Errington J."/>
            <person name="Fabret C."/>
            <person name="Ferrari E."/>
            <person name="Foulger D."/>
            <person name="Fritz C."/>
            <person name="Fujita M."/>
            <person name="Fujita Y."/>
            <person name="Fuma S."/>
            <person name="Galizzi A."/>
            <person name="Galleron N."/>
            <person name="Ghim S.-Y."/>
            <person name="Glaser P."/>
            <person name="Goffeau A."/>
            <person name="Golightly E.J."/>
            <person name="Grandi G."/>
            <person name="Guiseppi G."/>
            <person name="Guy B.J."/>
            <person name="Haga K."/>
            <person name="Haiech J."/>
            <person name="Harwood C.R."/>
            <person name="Henaut A."/>
            <person name="Hilbert H."/>
            <person name="Holsappel S."/>
            <person name="Hosono S."/>
            <person name="Hullo M.-F."/>
            <person name="Itaya M."/>
            <person name="Jones L.-M."/>
            <person name="Joris B."/>
            <person name="Karamata D."/>
            <person name="Kasahara Y."/>
            <person name="Klaerr-Blanchard M."/>
            <person name="Klein C."/>
            <person name="Kobayashi Y."/>
            <person name="Koetter P."/>
            <person name="Koningstein G."/>
            <person name="Krogh S."/>
            <person name="Kumano M."/>
            <person name="Kurita K."/>
            <person name="Lapidus A."/>
            <person name="Lardinois S."/>
            <person name="Lauber J."/>
            <person name="Lazarevic V."/>
            <person name="Lee S.-M."/>
            <person name="Levine A."/>
            <person name="Liu H."/>
            <person name="Masuda S."/>
            <person name="Mauel C."/>
            <person name="Medigue C."/>
            <person name="Medina N."/>
            <person name="Mellado R.P."/>
            <person name="Mizuno M."/>
            <person name="Moestl D."/>
            <person name="Nakai S."/>
            <person name="Noback M."/>
            <person name="Noone D."/>
            <person name="O'Reilly M."/>
            <person name="Ogawa K."/>
            <person name="Ogiwara A."/>
            <person name="Oudega B."/>
            <person name="Park S.-H."/>
            <person name="Parro V."/>
            <person name="Pohl T.M."/>
            <person name="Portetelle D."/>
            <person name="Porwollik S."/>
            <person name="Prescott A.M."/>
            <person name="Presecan E."/>
            <person name="Pujic P."/>
            <person name="Purnelle B."/>
            <person name="Rapoport G."/>
            <person name="Rey M."/>
            <person name="Reynolds S."/>
            <person name="Rieger M."/>
            <person name="Rivolta C."/>
            <person name="Rocha E."/>
            <person name="Roche B."/>
            <person name="Rose M."/>
            <person name="Sadaie Y."/>
            <person name="Sato T."/>
            <person name="Scanlan E."/>
            <person name="Schleich S."/>
            <person name="Schroeter R."/>
            <person name="Scoffone F."/>
            <person name="Sekiguchi J."/>
            <person name="Sekowska A."/>
            <person name="Seror S.J."/>
            <person name="Serror P."/>
            <person name="Shin B.-S."/>
            <person name="Soldo B."/>
            <person name="Sorokin A."/>
            <person name="Tacconi E."/>
            <person name="Takagi T."/>
            <person name="Takahashi H."/>
            <person name="Takemaru K."/>
            <person name="Takeuchi M."/>
            <person name="Tamakoshi A."/>
            <person name="Tanaka T."/>
            <person name="Terpstra P."/>
            <person name="Tognoni A."/>
            <person name="Tosato V."/>
            <person name="Uchiyama S."/>
            <person name="Vandenbol M."/>
            <person name="Vannier F."/>
            <person name="Vassarotti A."/>
            <person name="Viari A."/>
            <person name="Wambutt R."/>
            <person name="Wedler E."/>
            <person name="Wedler H."/>
            <person name="Weitzenegger T."/>
            <person name="Winters P."/>
            <person name="Wipat A."/>
            <person name="Yamamoto H."/>
            <person name="Yamane K."/>
            <person name="Yasumoto K."/>
            <person name="Yata K."/>
            <person name="Yoshida K."/>
            <person name="Yoshikawa H.-F."/>
            <person name="Zumstein E."/>
            <person name="Yoshikawa H."/>
            <person name="Danchin A."/>
        </authorList>
    </citation>
    <scope>NUCLEOTIDE SEQUENCE [LARGE SCALE GENOMIC DNA]</scope>
    <source>
        <strain>168</strain>
    </source>
</reference>
<reference key="3">
    <citation type="journal article" date="1999" name="J. Bacteriol.">
        <title>Regulation of hexuronate utilization in Bacillus subtilis.</title>
        <authorList>
            <person name="Mekjian K.R."/>
            <person name="Bryan E.M."/>
            <person name="Beall B.W."/>
            <person name="Moran C.P. Jr."/>
        </authorList>
    </citation>
    <scope>PROBABLE OPERON STRUCTURE</scope>
    <scope>INDUCTION</scope>
    <source>
        <strain>168 / MB24</strain>
    </source>
</reference>
<dbReference type="EC" id="1.1.1.58" evidence="1"/>
<dbReference type="EMBL" id="AF015825">
    <property type="protein sequence ID" value="AAC46334.1"/>
    <property type="molecule type" value="Genomic_DNA"/>
</dbReference>
<dbReference type="EMBL" id="AL009126">
    <property type="protein sequence ID" value="CAB13095.1"/>
    <property type="molecule type" value="Genomic_DNA"/>
</dbReference>
<dbReference type="PIR" id="C69853">
    <property type="entry name" value="C69853"/>
</dbReference>
<dbReference type="RefSeq" id="NP_389120.1">
    <property type="nucleotide sequence ID" value="NC_000964.3"/>
</dbReference>
<dbReference type="RefSeq" id="WP_003245710.1">
    <property type="nucleotide sequence ID" value="NZ_OZ025638.1"/>
</dbReference>
<dbReference type="SMR" id="O34354"/>
<dbReference type="FunCoup" id="O34354">
    <property type="interactions" value="79"/>
</dbReference>
<dbReference type="STRING" id="224308.BSU12380"/>
<dbReference type="PaxDb" id="224308-BSU12380"/>
<dbReference type="EnsemblBacteria" id="CAB13095">
    <property type="protein sequence ID" value="CAB13095"/>
    <property type="gene ID" value="BSU_12380"/>
</dbReference>
<dbReference type="GeneID" id="936468"/>
<dbReference type="KEGG" id="bsu:BSU12380"/>
<dbReference type="PATRIC" id="fig|224308.179.peg.1339"/>
<dbReference type="eggNOG" id="COG0246">
    <property type="taxonomic scope" value="Bacteria"/>
</dbReference>
<dbReference type="InParanoid" id="O34354"/>
<dbReference type="OrthoDB" id="9768714at2"/>
<dbReference type="PhylomeDB" id="O34354"/>
<dbReference type="BioCyc" id="BSUB:BSU12380-MONOMER"/>
<dbReference type="UniPathway" id="UPA00246"/>
<dbReference type="Proteomes" id="UP000001570">
    <property type="component" value="Chromosome"/>
</dbReference>
<dbReference type="GO" id="GO:0005829">
    <property type="term" value="C:cytosol"/>
    <property type="evidence" value="ECO:0000318"/>
    <property type="project" value="GO_Central"/>
</dbReference>
<dbReference type="GO" id="GO:0008926">
    <property type="term" value="F:mannitol-1-phosphate 5-dehydrogenase activity"/>
    <property type="evidence" value="ECO:0000318"/>
    <property type="project" value="GO_Central"/>
</dbReference>
<dbReference type="GO" id="GO:0009026">
    <property type="term" value="F:tagaturonate reductase activity"/>
    <property type="evidence" value="ECO:0000318"/>
    <property type="project" value="GO_Central"/>
</dbReference>
<dbReference type="GO" id="GO:0019698">
    <property type="term" value="P:D-galacturonate catabolic process"/>
    <property type="evidence" value="ECO:0000318"/>
    <property type="project" value="GO_Central"/>
</dbReference>
<dbReference type="GO" id="GO:0019592">
    <property type="term" value="P:mannitol catabolic process"/>
    <property type="evidence" value="ECO:0000318"/>
    <property type="project" value="GO_Central"/>
</dbReference>
<dbReference type="Gene3D" id="1.10.1040.10">
    <property type="entry name" value="N-(1-d-carboxylethyl)-l-norvaline Dehydrogenase, domain 2"/>
    <property type="match status" value="1"/>
</dbReference>
<dbReference type="Gene3D" id="3.40.50.720">
    <property type="entry name" value="NAD(P)-binding Rossmann-like Domain"/>
    <property type="match status" value="1"/>
</dbReference>
<dbReference type="HAMAP" id="MF_00670">
    <property type="entry name" value="Altron_oxidoreduct"/>
    <property type="match status" value="1"/>
</dbReference>
<dbReference type="InterPro" id="IPR008927">
    <property type="entry name" value="6-PGluconate_DH-like_C_sf"/>
</dbReference>
<dbReference type="InterPro" id="IPR013328">
    <property type="entry name" value="6PGD_dom2"/>
</dbReference>
<dbReference type="InterPro" id="IPR023668">
    <property type="entry name" value="Altronate_OxRdtase"/>
</dbReference>
<dbReference type="InterPro" id="IPR000669">
    <property type="entry name" value="Mannitol_DH"/>
</dbReference>
<dbReference type="InterPro" id="IPR013118">
    <property type="entry name" value="Mannitol_DH_C"/>
</dbReference>
<dbReference type="InterPro" id="IPR013131">
    <property type="entry name" value="Mannitol_DH_N"/>
</dbReference>
<dbReference type="InterPro" id="IPR036291">
    <property type="entry name" value="NAD(P)-bd_dom_sf"/>
</dbReference>
<dbReference type="NCBIfam" id="NF002969">
    <property type="entry name" value="PRK03643.1"/>
    <property type="match status" value="1"/>
</dbReference>
<dbReference type="PANTHER" id="PTHR30524:SF0">
    <property type="entry name" value="ALTRONATE OXIDOREDUCTASE-RELATED"/>
    <property type="match status" value="1"/>
</dbReference>
<dbReference type="PANTHER" id="PTHR30524">
    <property type="entry name" value="MANNITOL-1-PHOSPHATE 5-DEHYDROGENASE"/>
    <property type="match status" value="1"/>
</dbReference>
<dbReference type="Pfam" id="PF01232">
    <property type="entry name" value="Mannitol_dh"/>
    <property type="match status" value="1"/>
</dbReference>
<dbReference type="Pfam" id="PF08125">
    <property type="entry name" value="Mannitol_dh_C"/>
    <property type="match status" value="1"/>
</dbReference>
<dbReference type="PRINTS" id="PR00084">
    <property type="entry name" value="MTLDHDRGNASE"/>
</dbReference>
<dbReference type="SUPFAM" id="SSF48179">
    <property type="entry name" value="6-phosphogluconate dehydrogenase C-terminal domain-like"/>
    <property type="match status" value="1"/>
</dbReference>
<dbReference type="SUPFAM" id="SSF51735">
    <property type="entry name" value="NAD(P)-binding Rossmann-fold domains"/>
    <property type="match status" value="1"/>
</dbReference>
<organism>
    <name type="scientific">Bacillus subtilis (strain 168)</name>
    <dbReference type="NCBI Taxonomy" id="224308"/>
    <lineage>
        <taxon>Bacteria</taxon>
        <taxon>Bacillati</taxon>
        <taxon>Bacillota</taxon>
        <taxon>Bacilli</taxon>
        <taxon>Bacillales</taxon>
        <taxon>Bacillaceae</taxon>
        <taxon>Bacillus</taxon>
    </lineage>
</organism>
<comment type="catalytic activity">
    <reaction evidence="1">
        <text>D-altronate + NAD(+) = keto-D-tagaturonate + NADH + H(+)</text>
        <dbReference type="Rhea" id="RHEA:17813"/>
        <dbReference type="ChEBI" id="CHEBI:15378"/>
        <dbReference type="ChEBI" id="CHEBI:17360"/>
        <dbReference type="ChEBI" id="CHEBI:17886"/>
        <dbReference type="ChEBI" id="CHEBI:57540"/>
        <dbReference type="ChEBI" id="CHEBI:57945"/>
        <dbReference type="EC" id="1.1.1.58"/>
    </reaction>
</comment>
<comment type="pathway">
    <text evidence="1">Carbohydrate metabolism; pentose and glucuronate interconversion.</text>
</comment>
<comment type="induction">
    <text evidence="2">Induced by galacturonate, repressed by glucose.</text>
</comment>
<comment type="miscellaneous">
    <text>Member of the exu locus which is required for galacturonate utilization.</text>
</comment>
<comment type="similarity">
    <text evidence="1">Belongs to the mannitol dehydrogenase family. UxaB subfamily.</text>
</comment>
<accession>O34354</accession>
<sequence length="480" mass="55361">MQKLNKNVYDHYTQYPEKILQFGEGNFLRGFIDWQIDQLNQHTDFNGSVAVVQPRGSEKIKRLNEQDGLYTLFLQGMKDGEAVNEHMIINSISRGIDLFSDYEAYKELASSERLRFIISNTTEAGIVCDEKDRLEDRPQKTFPGKLTAFLYFRYQAFKGDQTKGCVLIPCELIENNGEKLRETVLHYAHLWKLEEGFTQWIHEANTFCNSLVDRIVPGFPVDSIDEITADLGYQDDLIVVGEQYYLWVIEGPDWIGKELPFAAAGLHTKIVSDLTPYRTKKVRILNGAHTAMTPVALLYGLKTVRDAVEHPEVGRFIRELIDDEILPVLKMEGLSQYADDVLNRFKNPYIKHYLESIALNAISKFKTRNLPTLKEYAEQKGQLPERLVFSFSALLYFYHDNETLQDDPAVLQFFKEVWCQEDGDMLRIASRVLGEQRLWGADLNEIPKLTDRVAVYLNHIHELGMQRALEQYCIQGGEVR</sequence>
<feature type="chain" id="PRO_0000170739" description="Altronate oxidoreductase">
    <location>
        <begin position="1"/>
        <end position="480"/>
    </location>
</feature>
<feature type="binding site" evidence="1">
    <location>
        <begin position="19"/>
        <end position="30"/>
    </location>
    <ligand>
        <name>NAD(+)</name>
        <dbReference type="ChEBI" id="CHEBI:57540"/>
    </ligand>
</feature>
<gene>
    <name evidence="1" type="primary">uxaB</name>
    <name type="synonym">yjmI</name>
    <name type="ordered locus">BSU12380</name>
</gene>
<name>UXAB_BACSU</name>